<name>NDUF6_BOVIN</name>
<sequence length="333" mass="38103">MAASTLGSAWGPLRLGVPGLCRRRPPRGLWARARRLSEPVASGRSVAAGSGLGASGTDRYCLELLRKRDYEGYLCSLLLPAESRSSAFALRAFNVELAQIKDSVSEKTIGLMRMQFWKKTVDDIYSDNPPHQPVAIELWKAVRRHNLTKRWLMKIIDEREKNLDDKAYRNIQELENYAENTQSSLLYLTLEILGIKDLHADHAASHIGKAQGIVTCLRATPYHGSRRRVFLPMDICMLHGVSQEDFLRKSQDRNVRDVVYDVASQAHLHLKHARSFHRSIPVKAFPAFLQTVALEDYLKKIQQVDFDLFHPSLQRKNTLLPLSLYIQSWRKRY</sequence>
<proteinExistence type="evidence at transcript level"/>
<organism>
    <name type="scientific">Bos taurus</name>
    <name type="common">Bovine</name>
    <dbReference type="NCBI Taxonomy" id="9913"/>
    <lineage>
        <taxon>Eukaryota</taxon>
        <taxon>Metazoa</taxon>
        <taxon>Chordata</taxon>
        <taxon>Craniata</taxon>
        <taxon>Vertebrata</taxon>
        <taxon>Euteleostomi</taxon>
        <taxon>Mammalia</taxon>
        <taxon>Eutheria</taxon>
        <taxon>Laurasiatheria</taxon>
        <taxon>Artiodactyla</taxon>
        <taxon>Ruminantia</taxon>
        <taxon>Pecora</taxon>
        <taxon>Bovidae</taxon>
        <taxon>Bovinae</taxon>
        <taxon>Bos</taxon>
    </lineage>
</organism>
<protein>
    <recommendedName>
        <fullName>NADH dehydrogenase (ubiquinone) complex I, assembly factor 6</fullName>
    </recommendedName>
</protein>
<feature type="transit peptide" description="Mitochondrion" evidence="3">
    <location>
        <begin position="1"/>
        <end position="44"/>
    </location>
</feature>
<feature type="chain" id="PRO_0000327442" description="NADH dehydrogenase (ubiquinone) complex I, assembly factor 6">
    <location>
        <begin position="45"/>
        <end position="333"/>
    </location>
</feature>
<reference key="1">
    <citation type="submission" date="2006-09" db="EMBL/GenBank/DDBJ databases">
        <authorList>
            <consortium name="NIH - Mammalian Gene Collection (MGC) project"/>
        </authorList>
    </citation>
    <scope>NUCLEOTIDE SEQUENCE [LARGE SCALE MRNA]</scope>
    <source>
        <strain>Hereford</strain>
        <tissue>Hippocampus</tissue>
    </source>
</reference>
<dbReference type="EMBL" id="BC123431">
    <property type="protein sequence ID" value="AAI23432.1"/>
    <property type="molecule type" value="mRNA"/>
</dbReference>
<dbReference type="RefSeq" id="NP_001098859.1">
    <property type="nucleotide sequence ID" value="NM_001105389.1"/>
</dbReference>
<dbReference type="SMR" id="A7YVD7"/>
<dbReference type="FunCoup" id="A7YVD7">
    <property type="interactions" value="2668"/>
</dbReference>
<dbReference type="STRING" id="9913.ENSBTAP00000009959"/>
<dbReference type="PaxDb" id="9913-ENSBTAP00000009959"/>
<dbReference type="Ensembl" id="ENSBTAT00000009959.5">
    <property type="protein sequence ID" value="ENSBTAP00000009959.4"/>
    <property type="gene ID" value="ENSBTAG00000007570.6"/>
</dbReference>
<dbReference type="GeneID" id="523017"/>
<dbReference type="KEGG" id="bta:523017"/>
<dbReference type="CTD" id="137682"/>
<dbReference type="VEuPathDB" id="HostDB:ENSBTAG00000007570"/>
<dbReference type="VGNC" id="VGNC:31958">
    <property type="gene designation" value="NDUFAF6"/>
</dbReference>
<dbReference type="eggNOG" id="KOG4411">
    <property type="taxonomic scope" value="Eukaryota"/>
</dbReference>
<dbReference type="GeneTree" id="ENSGT00510000048688"/>
<dbReference type="HOGENOM" id="CLU_037269_6_0_1"/>
<dbReference type="InParanoid" id="A7YVD7"/>
<dbReference type="OMA" id="MINAREQ"/>
<dbReference type="OrthoDB" id="270318at2759"/>
<dbReference type="TreeFam" id="TF300084"/>
<dbReference type="Reactome" id="R-BTA-6799198">
    <property type="pathway name" value="Complex I biogenesis"/>
</dbReference>
<dbReference type="Proteomes" id="UP000009136">
    <property type="component" value="Chromosome 14"/>
</dbReference>
<dbReference type="Bgee" id="ENSBTAG00000007570">
    <property type="expression patterns" value="Expressed in longissimus thoracis muscle and 106 other cell types or tissues"/>
</dbReference>
<dbReference type="GO" id="GO:0005743">
    <property type="term" value="C:mitochondrial inner membrane"/>
    <property type="evidence" value="ECO:0000250"/>
    <property type="project" value="UniProtKB"/>
</dbReference>
<dbReference type="GO" id="GO:0005739">
    <property type="term" value="C:mitochondrion"/>
    <property type="evidence" value="ECO:0000318"/>
    <property type="project" value="GO_Central"/>
</dbReference>
<dbReference type="GO" id="GO:0009058">
    <property type="term" value="P:biosynthetic process"/>
    <property type="evidence" value="ECO:0007669"/>
    <property type="project" value="InterPro"/>
</dbReference>
<dbReference type="GO" id="GO:0032981">
    <property type="term" value="P:mitochondrial respiratory chain complex I assembly"/>
    <property type="evidence" value="ECO:0000250"/>
    <property type="project" value="UniProtKB"/>
</dbReference>
<dbReference type="FunFam" id="1.10.600.10:FF:000013">
    <property type="entry name" value="NADH dehydrogenase (ubiquinone) complex I, assembly factor 6"/>
    <property type="match status" value="1"/>
</dbReference>
<dbReference type="Gene3D" id="1.10.600.10">
    <property type="entry name" value="Farnesyl Diphosphate Synthase"/>
    <property type="match status" value="1"/>
</dbReference>
<dbReference type="InterPro" id="IPR008949">
    <property type="entry name" value="Isoprenoid_synthase_dom_sf"/>
</dbReference>
<dbReference type="InterPro" id="IPR002060">
    <property type="entry name" value="Squ/phyt_synthse"/>
</dbReference>
<dbReference type="PANTHER" id="PTHR21181">
    <property type="match status" value="1"/>
</dbReference>
<dbReference type="PANTHER" id="PTHR21181:SF13">
    <property type="entry name" value="NADH DEHYDROGENASE (UBIQUINONE) COMPLEX I, ASSEMBLY FACTOR 6"/>
    <property type="match status" value="1"/>
</dbReference>
<dbReference type="Pfam" id="PF00494">
    <property type="entry name" value="SQS_PSY"/>
    <property type="match status" value="1"/>
</dbReference>
<dbReference type="SUPFAM" id="SSF48576">
    <property type="entry name" value="Terpenoid synthases"/>
    <property type="match status" value="1"/>
</dbReference>
<comment type="function">
    <text evidence="2">Involved in the assembly of mitochondrial NADH:ubiquinone oxidoreductase complex (complex I) at early stages. May play a role in the biogenesis of complex I subunit MT-ND1.</text>
</comment>
<comment type="subcellular location">
    <subcellularLocation>
        <location>Mitochondrion inner membrane</location>
    </subcellularLocation>
    <text evidence="1">Peripherally localized on the matrix face of the mitochondrial inner membrane.</text>
</comment>
<comment type="similarity">
    <text evidence="4">Belongs to the NDUFAF6 family.</text>
</comment>
<accession>A7YVD7</accession>
<evidence type="ECO:0000250" key="1"/>
<evidence type="ECO:0000250" key="2">
    <source>
        <dbReference type="UniProtKB" id="Q330K2"/>
    </source>
</evidence>
<evidence type="ECO:0000255" key="3"/>
<evidence type="ECO:0000305" key="4"/>
<gene>
    <name type="primary">NDUFAF6</name>
</gene>
<keyword id="KW-0472">Membrane</keyword>
<keyword id="KW-0496">Mitochondrion</keyword>
<keyword id="KW-0999">Mitochondrion inner membrane</keyword>
<keyword id="KW-1185">Reference proteome</keyword>
<keyword id="KW-0809">Transit peptide</keyword>